<name>PARE_RICTY</name>
<feature type="chain" id="PRO_0000273120" description="DNA topoisomerase 4 subunit B">
    <location>
        <begin position="1"/>
        <end position="663"/>
    </location>
</feature>
<feature type="domain" description="Toprim" evidence="1">
    <location>
        <begin position="440"/>
        <end position="554"/>
    </location>
</feature>
<feature type="binding site" evidence="1">
    <location>
        <position position="21"/>
    </location>
    <ligand>
        <name>ATP</name>
        <dbReference type="ChEBI" id="CHEBI:30616"/>
    </ligand>
</feature>
<feature type="binding site" evidence="1">
    <location>
        <position position="61"/>
    </location>
    <ligand>
        <name>ATP</name>
        <dbReference type="ChEBI" id="CHEBI:30616"/>
    </ligand>
</feature>
<feature type="binding site" evidence="1">
    <location>
        <position position="88"/>
    </location>
    <ligand>
        <name>ATP</name>
        <dbReference type="ChEBI" id="CHEBI:30616"/>
    </ligand>
</feature>
<feature type="binding site" evidence="1">
    <location>
        <begin position="130"/>
        <end position="136"/>
    </location>
    <ligand>
        <name>ATP</name>
        <dbReference type="ChEBI" id="CHEBI:30616"/>
    </ligand>
</feature>
<feature type="binding site" evidence="1">
    <location>
        <position position="360"/>
    </location>
    <ligand>
        <name>ATP</name>
        <dbReference type="ChEBI" id="CHEBI:30616"/>
    </ligand>
</feature>
<feature type="binding site" evidence="1">
    <location>
        <position position="446"/>
    </location>
    <ligand>
        <name>Mg(2+)</name>
        <dbReference type="ChEBI" id="CHEBI:18420"/>
        <label>1</label>
        <note>catalytic</note>
    </ligand>
</feature>
<feature type="binding site" evidence="1">
    <location>
        <position position="519"/>
    </location>
    <ligand>
        <name>Mg(2+)</name>
        <dbReference type="ChEBI" id="CHEBI:18420"/>
        <label>1</label>
        <note>catalytic</note>
    </ligand>
</feature>
<feature type="binding site" evidence="1">
    <location>
        <position position="519"/>
    </location>
    <ligand>
        <name>Mg(2+)</name>
        <dbReference type="ChEBI" id="CHEBI:18420"/>
        <label>2</label>
    </ligand>
</feature>
<feature type="binding site" evidence="1">
    <location>
        <position position="521"/>
    </location>
    <ligand>
        <name>Mg(2+)</name>
        <dbReference type="ChEBI" id="CHEBI:18420"/>
        <label>2</label>
    </ligand>
</feature>
<feature type="site" description="Interaction with DNA" evidence="1">
    <location>
        <position position="471"/>
    </location>
</feature>
<feature type="site" description="Interaction with DNA" evidence="1">
    <location>
        <position position="474"/>
    </location>
</feature>
<feature type="site" description="Interaction with DNA" evidence="1">
    <location>
        <position position="526"/>
    </location>
</feature>
<feature type="site" description="Interaction with DNA" evidence="1">
    <location>
        <position position="642"/>
    </location>
</feature>
<proteinExistence type="inferred from homology"/>
<reference key="1">
    <citation type="journal article" date="2004" name="J. Bacteriol.">
        <title>Complete genome sequence of Rickettsia typhi and comparison with sequences of other Rickettsiae.</title>
        <authorList>
            <person name="McLeod M.P."/>
            <person name="Qin X."/>
            <person name="Karpathy S.E."/>
            <person name="Gioia J."/>
            <person name="Highlander S.K."/>
            <person name="Fox G.E."/>
            <person name="McNeill T.Z."/>
            <person name="Jiang H."/>
            <person name="Muzny D."/>
            <person name="Jacob L.S."/>
            <person name="Hawes A.C."/>
            <person name="Sodergren E."/>
            <person name="Gill R."/>
            <person name="Hume J."/>
            <person name="Morgan M."/>
            <person name="Fan G."/>
            <person name="Amin A.G."/>
            <person name="Gibbs R.A."/>
            <person name="Hong C."/>
            <person name="Yu X.-J."/>
            <person name="Walker D.H."/>
            <person name="Weinstock G.M."/>
        </authorList>
    </citation>
    <scope>NUCLEOTIDE SEQUENCE [LARGE SCALE GENOMIC DNA]</scope>
    <source>
        <strain>ATCC VR-144 / Wilmington</strain>
    </source>
</reference>
<accession>Q68XE1</accession>
<organism>
    <name type="scientific">Rickettsia typhi (strain ATCC VR-144 / Wilmington)</name>
    <dbReference type="NCBI Taxonomy" id="257363"/>
    <lineage>
        <taxon>Bacteria</taxon>
        <taxon>Pseudomonadati</taxon>
        <taxon>Pseudomonadota</taxon>
        <taxon>Alphaproteobacteria</taxon>
        <taxon>Rickettsiales</taxon>
        <taxon>Rickettsiaceae</taxon>
        <taxon>Rickettsieae</taxon>
        <taxon>Rickettsia</taxon>
        <taxon>typhus group</taxon>
    </lineage>
</organism>
<protein>
    <recommendedName>
        <fullName evidence="1">DNA topoisomerase 4 subunit B</fullName>
        <ecNumber evidence="1">5.6.2.2</ecNumber>
    </recommendedName>
    <alternativeName>
        <fullName evidence="1">Topoisomerase IV subunit B</fullName>
    </alternativeName>
</protein>
<gene>
    <name evidence="1" type="primary">parE</name>
    <name type="ordered locus">RT0219</name>
</gene>
<keyword id="KW-0067">ATP-binding</keyword>
<keyword id="KW-0238">DNA-binding</keyword>
<keyword id="KW-0413">Isomerase</keyword>
<keyword id="KW-0460">Magnesium</keyword>
<keyword id="KW-0479">Metal-binding</keyword>
<keyword id="KW-0547">Nucleotide-binding</keyword>
<keyword id="KW-0799">Topoisomerase</keyword>
<sequence length="663" mass="74507">MSDLFSFNNKEKKNKIIYTNYSAKDIEVLDGLEPVRKRPGMYIGGTDSNAMHHLVSEVLDNAMDEAVAGFASIIMIKMHQDHSITIFDNGRGIPIDNHPKFPNKSALEVILTTLHSGSKFSNNVYHTAGGLHGVGISVVNALSKHLKIEVYQQGKLYSQSYSKGEKLTDLISTEVSKRLRGTSINFTPDPEIFSETLHFNPKKIYEIARSKAYLYRGVSIEWECEVEVPSDIPKKALINFPNGLKDYLSSKISLDNLVIPEIFSGNIESTMDAIKLEWAICWQNNDTSAFMKSYCNTVPTPQGGTHEQGLKSAILRGLKAYSEMIGNKKSANLTIEDIFETASVVLSVFIVEPSFQGQTKEKLVSNGVSKLVENIIKDHFDHFLSSDKVLATHLLEHVIAISEFRRNKKNERNISRKNATQKLRLPGKLADCTRTSAEGTELFIVEGDSAGGSAKQARNRETQAVLPLWGKVLNVASSTLEKIINNQAIQDLEIALACGSLKNYKKENLRYEKIIIMTDADVDGAHIASLLMTFFFLRMPQLVKEGHLYLAKPPLYRLTQSNKIYYACDEEEKIKLTYKLSKTSKAKIEVGRFKGLGEMMPAQLKETTMHPEKRSLLKVTLEDVQNVDKIVDDLMGKKPEKRFQFIYEQALVKMDQIINKLDI</sequence>
<dbReference type="EC" id="5.6.2.2" evidence="1"/>
<dbReference type="EMBL" id="AE017197">
    <property type="protein sequence ID" value="AAU03701.1"/>
    <property type="molecule type" value="Genomic_DNA"/>
</dbReference>
<dbReference type="RefSeq" id="WP_011190687.1">
    <property type="nucleotide sequence ID" value="NC_006142.1"/>
</dbReference>
<dbReference type="SMR" id="Q68XE1"/>
<dbReference type="KEGG" id="rty:RT0219"/>
<dbReference type="eggNOG" id="COG0187">
    <property type="taxonomic scope" value="Bacteria"/>
</dbReference>
<dbReference type="HOGENOM" id="CLU_006146_4_1_5"/>
<dbReference type="OrthoDB" id="9802808at2"/>
<dbReference type="Proteomes" id="UP000000604">
    <property type="component" value="Chromosome"/>
</dbReference>
<dbReference type="GO" id="GO:0005694">
    <property type="term" value="C:chromosome"/>
    <property type="evidence" value="ECO:0007669"/>
    <property type="project" value="InterPro"/>
</dbReference>
<dbReference type="GO" id="GO:0005524">
    <property type="term" value="F:ATP binding"/>
    <property type="evidence" value="ECO:0007669"/>
    <property type="project" value="UniProtKB-UniRule"/>
</dbReference>
<dbReference type="GO" id="GO:0003677">
    <property type="term" value="F:DNA binding"/>
    <property type="evidence" value="ECO:0007669"/>
    <property type="project" value="UniProtKB-UniRule"/>
</dbReference>
<dbReference type="GO" id="GO:0003918">
    <property type="term" value="F:DNA topoisomerase type II (double strand cut, ATP-hydrolyzing) activity"/>
    <property type="evidence" value="ECO:0007669"/>
    <property type="project" value="UniProtKB-UniRule"/>
</dbReference>
<dbReference type="GO" id="GO:0046872">
    <property type="term" value="F:metal ion binding"/>
    <property type="evidence" value="ECO:0007669"/>
    <property type="project" value="UniProtKB-KW"/>
</dbReference>
<dbReference type="GO" id="GO:0007059">
    <property type="term" value="P:chromosome segregation"/>
    <property type="evidence" value="ECO:0007669"/>
    <property type="project" value="UniProtKB-UniRule"/>
</dbReference>
<dbReference type="GO" id="GO:0006265">
    <property type="term" value="P:DNA topological change"/>
    <property type="evidence" value="ECO:0007669"/>
    <property type="project" value="UniProtKB-UniRule"/>
</dbReference>
<dbReference type="CDD" id="cd16928">
    <property type="entry name" value="HATPase_GyrB-like"/>
    <property type="match status" value="1"/>
</dbReference>
<dbReference type="CDD" id="cd00822">
    <property type="entry name" value="TopoII_Trans_DNA_gyrase"/>
    <property type="match status" value="1"/>
</dbReference>
<dbReference type="FunFam" id="3.40.50.670:FF:000006">
    <property type="entry name" value="DNA topoisomerase (ATP-hydrolyzing)"/>
    <property type="match status" value="1"/>
</dbReference>
<dbReference type="Gene3D" id="3.30.230.10">
    <property type="match status" value="1"/>
</dbReference>
<dbReference type="Gene3D" id="3.40.50.670">
    <property type="match status" value="1"/>
</dbReference>
<dbReference type="Gene3D" id="3.30.565.10">
    <property type="entry name" value="Histidine kinase-like ATPase, C-terminal domain"/>
    <property type="match status" value="1"/>
</dbReference>
<dbReference type="HAMAP" id="MF_00938">
    <property type="entry name" value="ParE_type1"/>
    <property type="match status" value="1"/>
</dbReference>
<dbReference type="InterPro" id="IPR002288">
    <property type="entry name" value="DNA_gyrase_B_C"/>
</dbReference>
<dbReference type="InterPro" id="IPR036890">
    <property type="entry name" value="HATPase_C_sf"/>
</dbReference>
<dbReference type="InterPro" id="IPR020568">
    <property type="entry name" value="Ribosomal_Su5_D2-typ_SF"/>
</dbReference>
<dbReference type="InterPro" id="IPR014721">
    <property type="entry name" value="Ribsml_uS5_D2-typ_fold_subgr"/>
</dbReference>
<dbReference type="InterPro" id="IPR001241">
    <property type="entry name" value="Topo_IIA"/>
</dbReference>
<dbReference type="InterPro" id="IPR013760">
    <property type="entry name" value="Topo_IIA-like_dom_sf"/>
</dbReference>
<dbReference type="InterPro" id="IPR000565">
    <property type="entry name" value="Topo_IIA_B"/>
</dbReference>
<dbReference type="InterPro" id="IPR013759">
    <property type="entry name" value="Topo_IIA_B_C"/>
</dbReference>
<dbReference type="InterPro" id="IPR013506">
    <property type="entry name" value="Topo_IIA_bsu_dom2"/>
</dbReference>
<dbReference type="InterPro" id="IPR018522">
    <property type="entry name" value="TopoIIA_CS"/>
</dbReference>
<dbReference type="InterPro" id="IPR005737">
    <property type="entry name" value="TopoIV_B_Gneg"/>
</dbReference>
<dbReference type="InterPro" id="IPR006171">
    <property type="entry name" value="TOPRIM_dom"/>
</dbReference>
<dbReference type="NCBIfam" id="TIGR01055">
    <property type="entry name" value="parE_Gneg"/>
    <property type="match status" value="1"/>
</dbReference>
<dbReference type="PANTHER" id="PTHR45866:SF1">
    <property type="entry name" value="DNA GYRASE SUBUNIT B, MITOCHONDRIAL"/>
    <property type="match status" value="1"/>
</dbReference>
<dbReference type="PANTHER" id="PTHR45866">
    <property type="entry name" value="DNA GYRASE/TOPOISOMERASE SUBUNIT B"/>
    <property type="match status" value="1"/>
</dbReference>
<dbReference type="Pfam" id="PF00204">
    <property type="entry name" value="DNA_gyraseB"/>
    <property type="match status" value="1"/>
</dbReference>
<dbReference type="Pfam" id="PF00986">
    <property type="entry name" value="DNA_gyraseB_C"/>
    <property type="match status" value="1"/>
</dbReference>
<dbReference type="Pfam" id="PF02518">
    <property type="entry name" value="HATPase_c"/>
    <property type="match status" value="1"/>
</dbReference>
<dbReference type="Pfam" id="PF01751">
    <property type="entry name" value="Toprim"/>
    <property type="match status" value="1"/>
</dbReference>
<dbReference type="PRINTS" id="PR01159">
    <property type="entry name" value="DNAGYRASEB"/>
</dbReference>
<dbReference type="PRINTS" id="PR00418">
    <property type="entry name" value="TPI2FAMILY"/>
</dbReference>
<dbReference type="SMART" id="SM00387">
    <property type="entry name" value="HATPase_c"/>
    <property type="match status" value="1"/>
</dbReference>
<dbReference type="SMART" id="SM00433">
    <property type="entry name" value="TOP2c"/>
    <property type="match status" value="1"/>
</dbReference>
<dbReference type="SUPFAM" id="SSF55874">
    <property type="entry name" value="ATPase domain of HSP90 chaperone/DNA topoisomerase II/histidine kinase"/>
    <property type="match status" value="1"/>
</dbReference>
<dbReference type="SUPFAM" id="SSF54211">
    <property type="entry name" value="Ribosomal protein S5 domain 2-like"/>
    <property type="match status" value="1"/>
</dbReference>
<dbReference type="SUPFAM" id="SSF56719">
    <property type="entry name" value="Type II DNA topoisomerase"/>
    <property type="match status" value="1"/>
</dbReference>
<dbReference type="PROSITE" id="PS00177">
    <property type="entry name" value="TOPOISOMERASE_II"/>
    <property type="match status" value="1"/>
</dbReference>
<dbReference type="PROSITE" id="PS50880">
    <property type="entry name" value="TOPRIM"/>
    <property type="match status" value="1"/>
</dbReference>
<evidence type="ECO:0000255" key="1">
    <source>
        <dbReference type="HAMAP-Rule" id="MF_00938"/>
    </source>
</evidence>
<comment type="function">
    <text evidence="1">Topoisomerase IV is essential for chromosome segregation. It relaxes supercoiled DNA. Performs the decatenation events required during the replication of a circular DNA molecule.</text>
</comment>
<comment type="catalytic activity">
    <reaction evidence="1">
        <text>ATP-dependent breakage, passage and rejoining of double-stranded DNA.</text>
        <dbReference type="EC" id="5.6.2.2"/>
    </reaction>
</comment>
<comment type="cofactor">
    <cofactor evidence="1">
        <name>Mg(2+)</name>
        <dbReference type="ChEBI" id="CHEBI:18420"/>
    </cofactor>
    <cofactor evidence="1">
        <name>Mn(2+)</name>
        <dbReference type="ChEBI" id="CHEBI:29035"/>
    </cofactor>
    <cofactor evidence="1">
        <name>Ca(2+)</name>
        <dbReference type="ChEBI" id="CHEBI:29108"/>
    </cofactor>
    <text evidence="1">Binds two Mg(2+) per subunit. The magnesium ions form salt bridges with both the protein and the DNA. Can also accept other divalent metal cations, such as Mn(2+) or Ca(2+).</text>
</comment>
<comment type="subunit">
    <text evidence="1">Heterotetramer composed of ParC and ParE.</text>
</comment>
<comment type="similarity">
    <text evidence="1">Belongs to the type II topoisomerase family. ParE type 1 subfamily.</text>
</comment>